<sequence length="484" mass="55527">MQSRMQGQRTLQLRQNSCIQPKWISQKNFTFGAATSAYQVEGAAHRALNGWDYFTHRYPERVSDRSIGDLACNSYDLYKDDVKLLKRMNVQAYRFSIAWSRVLPKGRLIGGVDENGITYYNNLINELKANGIEPFVTIFHWDVPQDFRRRIWRLLKPTYSDFKNYAELLFQRFGDRVKFWITLNQPYSLAVKGYGDGQYPPGRCTDCEFGGDSGTEPYIVGHHELLAHMEAVSLYRKRYQKFQGGKIGTTLIGRWFIPLNETNDLDKAAAKREFDFSVLGSTGVRTISKDNERLGDRLPKFTPKQSALLKGSLDFLGLNYYVTRYATYRPPPMPTQHSVLTDSGVTIGFERNGVSIGVKASINFDVKDLRHLVDFFLFVELLLLSTRIPSDSKSHQKQELLMLIANALADNGRIQFQCSHLSCLKCAIEDGCNVAGYFAWSLMDNYEFGNGYTLRFDMNWVNFTNPADRREKASGKWFSRFIAK</sequence>
<proteinExistence type="uncertain"/>
<dbReference type="EC" id="3.2.1.147" evidence="2"/>
<dbReference type="EMBL" id="AC024261">
    <property type="protein sequence ID" value="AAG52622.1"/>
    <property type="status" value="ALT_SEQ"/>
    <property type="molecule type" value="Genomic_DNA"/>
</dbReference>
<dbReference type="EMBL" id="CP002684">
    <property type="status" value="NOT_ANNOTATED_CDS"/>
    <property type="molecule type" value="Genomic_DNA"/>
</dbReference>
<dbReference type="PIR" id="C96553">
    <property type="entry name" value="C96553"/>
</dbReference>
<dbReference type="SMR" id="Q9C8K1"/>
<dbReference type="FunCoup" id="Q9C8K1">
    <property type="interactions" value="1"/>
</dbReference>
<dbReference type="STRING" id="3702.Q9C8K1"/>
<dbReference type="CAZy" id="GH1">
    <property type="family name" value="Glycoside Hydrolase Family 1"/>
</dbReference>
<dbReference type="GlyCosmos" id="Q9C8K1">
    <property type="glycosylation" value="3 sites, No reported glycans"/>
</dbReference>
<dbReference type="GlyGen" id="Q9C8K1">
    <property type="glycosylation" value="3 sites"/>
</dbReference>
<dbReference type="PaxDb" id="3702-AT1G51490.1"/>
<dbReference type="Araport" id="AT1G51490"/>
<dbReference type="TAIR" id="AT1G51490">
    <property type="gene designation" value="BGLU36"/>
</dbReference>
<dbReference type="eggNOG" id="KOG0626">
    <property type="taxonomic scope" value="Eukaryota"/>
</dbReference>
<dbReference type="HOGENOM" id="CLU_001859_1_0_1"/>
<dbReference type="InParanoid" id="Q9C8K1"/>
<dbReference type="PhylomeDB" id="Q9C8K1"/>
<dbReference type="BioCyc" id="ARA:AT1G51490-MONOMER"/>
<dbReference type="Proteomes" id="UP000006548">
    <property type="component" value="Chromosome 1"/>
</dbReference>
<dbReference type="ExpressionAtlas" id="Q9C8K1">
    <property type="expression patterns" value="baseline and differential"/>
</dbReference>
<dbReference type="GO" id="GO:0005739">
    <property type="term" value="C:mitochondrion"/>
    <property type="evidence" value="ECO:0007005"/>
    <property type="project" value="TAIR"/>
</dbReference>
<dbReference type="GO" id="GO:0008422">
    <property type="term" value="F:beta-glucosidase activity"/>
    <property type="evidence" value="ECO:0000318"/>
    <property type="project" value="GO_Central"/>
</dbReference>
<dbReference type="GO" id="GO:0019137">
    <property type="term" value="F:thioglucosidase activity"/>
    <property type="evidence" value="ECO:0007669"/>
    <property type="project" value="UniProtKB-EC"/>
</dbReference>
<dbReference type="GO" id="GO:0005975">
    <property type="term" value="P:carbohydrate metabolic process"/>
    <property type="evidence" value="ECO:0007669"/>
    <property type="project" value="InterPro"/>
</dbReference>
<dbReference type="FunFam" id="3.20.20.80:FF:000041">
    <property type="entry name" value="Beta-glucosidase 7"/>
    <property type="match status" value="1"/>
</dbReference>
<dbReference type="Gene3D" id="3.20.20.80">
    <property type="entry name" value="Glycosidases"/>
    <property type="match status" value="1"/>
</dbReference>
<dbReference type="InterPro" id="IPR001360">
    <property type="entry name" value="Glyco_hydro_1"/>
</dbReference>
<dbReference type="InterPro" id="IPR033132">
    <property type="entry name" value="Glyco_hydro_1_N_CS"/>
</dbReference>
<dbReference type="InterPro" id="IPR017853">
    <property type="entry name" value="Glycoside_hydrolase_SF"/>
</dbReference>
<dbReference type="PANTHER" id="PTHR10353">
    <property type="entry name" value="GLYCOSYL HYDROLASE"/>
    <property type="match status" value="1"/>
</dbReference>
<dbReference type="PANTHER" id="PTHR10353:SF301">
    <property type="entry name" value="MYROSINASE 4-RELATED"/>
    <property type="match status" value="1"/>
</dbReference>
<dbReference type="Pfam" id="PF00232">
    <property type="entry name" value="Glyco_hydro_1"/>
    <property type="match status" value="1"/>
</dbReference>
<dbReference type="PRINTS" id="PR00131">
    <property type="entry name" value="GLHYDRLASE1"/>
</dbReference>
<dbReference type="SUPFAM" id="SSF51445">
    <property type="entry name" value="(Trans)glycosidases"/>
    <property type="match status" value="1"/>
</dbReference>
<dbReference type="PROSITE" id="PS00653">
    <property type="entry name" value="GLYCOSYL_HYDROL_F1_2"/>
    <property type="match status" value="1"/>
</dbReference>
<feature type="chain" id="PRO_0000389598" description="Putative myrosinase 6">
    <location>
        <begin position="1"/>
        <end position="484"/>
    </location>
</feature>
<feature type="binding site" evidence="3">
    <location>
        <position position="39"/>
    </location>
    <ligand>
        <name>a beta-D-glucoside</name>
        <dbReference type="ChEBI" id="CHEBI:22798"/>
    </ligand>
</feature>
<feature type="binding site" evidence="3">
    <location>
        <position position="140"/>
    </location>
    <ligand>
        <name>a beta-D-glucoside</name>
        <dbReference type="ChEBI" id="CHEBI:22798"/>
    </ligand>
</feature>
<feature type="binding site" evidence="4">
    <location>
        <begin position="184"/>
        <end position="185"/>
    </location>
    <ligand>
        <name>a beta-D-glucoside</name>
        <dbReference type="ChEBI" id="CHEBI:22798"/>
    </ligand>
</feature>
<feature type="binding site" evidence="3">
    <location>
        <position position="321"/>
    </location>
    <ligand>
        <name>a beta-D-glucoside</name>
        <dbReference type="ChEBI" id="CHEBI:22798"/>
    </ligand>
</feature>
<feature type="binding site" evidence="3">
    <location>
        <position position="440"/>
    </location>
    <ligand>
        <name>a beta-D-glucoside</name>
        <dbReference type="ChEBI" id="CHEBI:22798"/>
    </ligand>
</feature>
<feature type="binding site" evidence="5">
    <location>
        <begin position="447"/>
        <end position="448"/>
    </location>
    <ligand>
        <name>a beta-D-glucoside</name>
        <dbReference type="ChEBI" id="CHEBI:22798"/>
    </ligand>
</feature>
<feature type="binding site" evidence="1">
    <location>
        <position position="456"/>
    </location>
    <ligand>
        <name>a beta-D-glucoside</name>
        <dbReference type="ChEBI" id="CHEBI:22798"/>
    </ligand>
</feature>
<feature type="glycosylation site" description="N-linked (GlcNAc...) asparagine" evidence="6">
    <location>
        <position position="28"/>
    </location>
</feature>
<feature type="glycosylation site" description="N-linked (GlcNAc...) asparagine" evidence="6">
    <location>
        <position position="260"/>
    </location>
</feature>
<feature type="glycosylation site" description="N-linked (GlcNAc...) asparagine" evidence="6">
    <location>
        <position position="462"/>
    </location>
</feature>
<feature type="disulfide bond" evidence="3">
    <location>
        <begin position="204"/>
        <end position="207"/>
    </location>
</feature>
<evidence type="ECO:0000250" key="1">
    <source>
        <dbReference type="UniProtKB" id="Q1XH05"/>
    </source>
</evidence>
<evidence type="ECO:0000250" key="2">
    <source>
        <dbReference type="UniProtKB" id="Q3ECS3"/>
    </source>
</evidence>
<evidence type="ECO:0000250" key="3">
    <source>
        <dbReference type="UniProtKB" id="Q7XSK0"/>
    </source>
</evidence>
<evidence type="ECO:0000250" key="4">
    <source>
        <dbReference type="UniProtKB" id="Q8GU20"/>
    </source>
</evidence>
<evidence type="ECO:0000250" key="5">
    <source>
        <dbReference type="UniProtKB" id="Q8L7J2"/>
    </source>
</evidence>
<evidence type="ECO:0000255" key="6">
    <source>
        <dbReference type="PROSITE-ProRule" id="PRU00498"/>
    </source>
</evidence>
<evidence type="ECO:0000303" key="7">
    <source>
    </source>
</evidence>
<evidence type="ECO:0000305" key="8"/>
<evidence type="ECO:0000312" key="9">
    <source>
        <dbReference type="Araport" id="AT1G51490"/>
    </source>
</evidence>
<evidence type="ECO:0000312" key="10">
    <source>
        <dbReference type="EMBL" id="AAG52622.1"/>
    </source>
</evidence>
<accession>Q9C8K1</accession>
<name>BGL36_ARATH</name>
<gene>
    <name evidence="2" type="primary">TGG6</name>
    <name evidence="7" type="synonym">BGLU36</name>
    <name evidence="9" type="ordered locus">At1g51490</name>
    <name evidence="10" type="ORF">F5D21.16</name>
</gene>
<reference key="1">
    <citation type="journal article" date="2000" name="Nature">
        <title>Sequence and analysis of chromosome 1 of the plant Arabidopsis thaliana.</title>
        <authorList>
            <person name="Theologis A."/>
            <person name="Ecker J.R."/>
            <person name="Palm C.J."/>
            <person name="Federspiel N.A."/>
            <person name="Kaul S."/>
            <person name="White O."/>
            <person name="Alonso J."/>
            <person name="Altafi H."/>
            <person name="Araujo R."/>
            <person name="Bowman C.L."/>
            <person name="Brooks S.Y."/>
            <person name="Buehler E."/>
            <person name="Chan A."/>
            <person name="Chao Q."/>
            <person name="Chen H."/>
            <person name="Cheuk R.F."/>
            <person name="Chin C.W."/>
            <person name="Chung M.K."/>
            <person name="Conn L."/>
            <person name="Conway A.B."/>
            <person name="Conway A.R."/>
            <person name="Creasy T.H."/>
            <person name="Dewar K."/>
            <person name="Dunn P."/>
            <person name="Etgu P."/>
            <person name="Feldblyum T.V."/>
            <person name="Feng J.-D."/>
            <person name="Fong B."/>
            <person name="Fujii C.Y."/>
            <person name="Gill J.E."/>
            <person name="Goldsmith A.D."/>
            <person name="Haas B."/>
            <person name="Hansen N.F."/>
            <person name="Hughes B."/>
            <person name="Huizar L."/>
            <person name="Hunter J.L."/>
            <person name="Jenkins J."/>
            <person name="Johnson-Hopson C."/>
            <person name="Khan S."/>
            <person name="Khaykin E."/>
            <person name="Kim C.J."/>
            <person name="Koo H.L."/>
            <person name="Kremenetskaia I."/>
            <person name="Kurtz D.B."/>
            <person name="Kwan A."/>
            <person name="Lam B."/>
            <person name="Langin-Hooper S."/>
            <person name="Lee A."/>
            <person name="Lee J.M."/>
            <person name="Lenz C.A."/>
            <person name="Li J.H."/>
            <person name="Li Y.-P."/>
            <person name="Lin X."/>
            <person name="Liu S.X."/>
            <person name="Liu Z.A."/>
            <person name="Luros J.S."/>
            <person name="Maiti R."/>
            <person name="Marziali A."/>
            <person name="Militscher J."/>
            <person name="Miranda M."/>
            <person name="Nguyen M."/>
            <person name="Nierman W.C."/>
            <person name="Osborne B.I."/>
            <person name="Pai G."/>
            <person name="Peterson J."/>
            <person name="Pham P.K."/>
            <person name="Rizzo M."/>
            <person name="Rooney T."/>
            <person name="Rowley D."/>
            <person name="Sakano H."/>
            <person name="Salzberg S.L."/>
            <person name="Schwartz J.R."/>
            <person name="Shinn P."/>
            <person name="Southwick A.M."/>
            <person name="Sun H."/>
            <person name="Tallon L.J."/>
            <person name="Tambunga G."/>
            <person name="Toriumi M.J."/>
            <person name="Town C.D."/>
            <person name="Utterback T."/>
            <person name="Van Aken S."/>
            <person name="Vaysberg M."/>
            <person name="Vysotskaia V.S."/>
            <person name="Walker M."/>
            <person name="Wu D."/>
            <person name="Yu G."/>
            <person name="Fraser C.M."/>
            <person name="Venter J.C."/>
            <person name="Davis R.W."/>
        </authorList>
    </citation>
    <scope>NUCLEOTIDE SEQUENCE [LARGE SCALE GENOMIC DNA]</scope>
    <source>
        <strain>cv. Columbia</strain>
    </source>
</reference>
<reference key="2">
    <citation type="journal article" date="2017" name="Plant J.">
        <title>Araport11: a complete reannotation of the Arabidopsis thaliana reference genome.</title>
        <authorList>
            <person name="Cheng C.Y."/>
            <person name="Krishnakumar V."/>
            <person name="Chan A.P."/>
            <person name="Thibaud-Nissen F."/>
            <person name="Schobel S."/>
            <person name="Town C.D."/>
        </authorList>
    </citation>
    <scope>GENOME REANNOTATION</scope>
    <source>
        <strain>cv. Columbia</strain>
    </source>
</reference>
<reference key="3">
    <citation type="journal article" date="2004" name="Plant Mol. Biol.">
        <title>Functional genomic analysis of Arabidopsis thaliana glycoside hydrolase family 1.</title>
        <authorList>
            <person name="Xu Z."/>
            <person name="Escamilla-Trevino L.L."/>
            <person name="Zeng L."/>
            <person name="Lalgondar M."/>
            <person name="Bevan D.R."/>
            <person name="Winkel B.S.J."/>
            <person name="Mohamed A."/>
            <person name="Cheng C.-L."/>
            <person name="Shih M.-C."/>
            <person name="Poulton J.E."/>
            <person name="Esen A."/>
        </authorList>
    </citation>
    <scope>GENE FAMILY</scope>
    <scope>NOMENCLATURE</scope>
</reference>
<comment type="catalytic activity">
    <reaction evidence="2">
        <text>a thioglucoside + H2O = a sugar + a thiol.</text>
        <dbReference type="EC" id="3.2.1.147"/>
    </reaction>
</comment>
<comment type="similarity">
    <text evidence="8">Belongs to the glycosyl hydrolase 1 family.</text>
</comment>
<comment type="caution">
    <text evidence="8">Could be the product of a pseudogene.</text>
</comment>
<comment type="sequence caution" evidence="8">
    <conflict type="erroneous gene model prediction">
        <sequence resource="EMBL-CDS" id="AAG52622"/>
    </conflict>
</comment>
<protein>
    <recommendedName>
        <fullName evidence="2">Putative myrosinase 6</fullName>
        <ecNumber evidence="2">3.2.1.147</ecNumber>
    </recommendedName>
    <alternativeName>
        <fullName evidence="7">Beta-glucosidase 36</fullName>
        <shortName evidence="7">AtBGLU36</shortName>
    </alternativeName>
    <alternativeName>
        <fullName evidence="2">Sinigrinase 6</fullName>
    </alternativeName>
    <alternativeName>
        <fullName evidence="2">Thioglucosidase 6</fullName>
    </alternativeName>
</protein>
<keyword id="KW-1015">Disulfide bond</keyword>
<keyword id="KW-0325">Glycoprotein</keyword>
<keyword id="KW-0326">Glycosidase</keyword>
<keyword id="KW-0378">Hydrolase</keyword>
<keyword id="KW-1185">Reference proteome</keyword>
<organism>
    <name type="scientific">Arabidopsis thaliana</name>
    <name type="common">Mouse-ear cress</name>
    <dbReference type="NCBI Taxonomy" id="3702"/>
    <lineage>
        <taxon>Eukaryota</taxon>
        <taxon>Viridiplantae</taxon>
        <taxon>Streptophyta</taxon>
        <taxon>Embryophyta</taxon>
        <taxon>Tracheophyta</taxon>
        <taxon>Spermatophyta</taxon>
        <taxon>Magnoliopsida</taxon>
        <taxon>eudicotyledons</taxon>
        <taxon>Gunneridae</taxon>
        <taxon>Pentapetalae</taxon>
        <taxon>rosids</taxon>
        <taxon>malvids</taxon>
        <taxon>Brassicales</taxon>
        <taxon>Brassicaceae</taxon>
        <taxon>Camelineae</taxon>
        <taxon>Arabidopsis</taxon>
    </lineage>
</organism>